<proteinExistence type="inferred from homology"/>
<comment type="function">
    <text evidence="1">NDH-1 shuttles electrons from NADH, via FMN and iron-sulfur (Fe-S) centers, to quinones in the respiratory chain. The immediate electron acceptor for the enzyme in this species is believed to be ubiquinone. Couples the redox reaction to proton translocation (for every two electrons transferred, four hydrogen ions are translocated across the cytoplasmic membrane), and thus conserves the redox energy in a proton gradient.</text>
</comment>
<comment type="catalytic activity">
    <reaction evidence="1">
        <text>a quinone + NADH + 5 H(+)(in) = a quinol + NAD(+) + 4 H(+)(out)</text>
        <dbReference type="Rhea" id="RHEA:57888"/>
        <dbReference type="ChEBI" id="CHEBI:15378"/>
        <dbReference type="ChEBI" id="CHEBI:24646"/>
        <dbReference type="ChEBI" id="CHEBI:57540"/>
        <dbReference type="ChEBI" id="CHEBI:57945"/>
        <dbReference type="ChEBI" id="CHEBI:132124"/>
    </reaction>
</comment>
<comment type="subunit">
    <text evidence="1">NDH-1 is composed of 14 different subunits. Subunits NuoB, C, D, E, F, and G constitute the peripheral sector of the complex.</text>
</comment>
<comment type="subcellular location">
    <subcellularLocation>
        <location evidence="1">Cell inner membrane</location>
        <topology evidence="1">Peripheral membrane protein</topology>
        <orientation evidence="1">Cytoplasmic side</orientation>
    </subcellularLocation>
</comment>
<comment type="similarity">
    <text evidence="1">Belongs to the complex I 49 kDa subunit family.</text>
</comment>
<reference key="1">
    <citation type="submission" date="2007-07" db="EMBL/GenBank/DDBJ databases">
        <title>Genome sequence of Campylobacter curvus 525.92 isolated from human feces.</title>
        <authorList>
            <person name="Fouts D.E."/>
            <person name="Mongodin E.F."/>
            <person name="Puiu D."/>
            <person name="Sebastian Y."/>
            <person name="Miller W.G."/>
            <person name="Mandrell R.E."/>
            <person name="Lastovica A.J."/>
            <person name="Nelson K.E."/>
        </authorList>
    </citation>
    <scope>NUCLEOTIDE SEQUENCE [LARGE SCALE GENOMIC DNA]</scope>
    <source>
        <strain>525.92</strain>
    </source>
</reference>
<keyword id="KW-0997">Cell inner membrane</keyword>
<keyword id="KW-1003">Cell membrane</keyword>
<keyword id="KW-0472">Membrane</keyword>
<keyword id="KW-0520">NAD</keyword>
<keyword id="KW-0874">Quinone</keyword>
<keyword id="KW-1185">Reference proteome</keyword>
<keyword id="KW-1278">Translocase</keyword>
<keyword id="KW-0813">Transport</keyword>
<keyword id="KW-0830">Ubiquinone</keyword>
<name>NUOD_CAMC5</name>
<dbReference type="EC" id="7.1.1.-" evidence="1"/>
<dbReference type="EMBL" id="CP000767">
    <property type="protein sequence ID" value="EAU00563.1"/>
    <property type="molecule type" value="Genomic_DNA"/>
</dbReference>
<dbReference type="RefSeq" id="WP_011991728.1">
    <property type="nucleotide sequence ID" value="NC_009715.2"/>
</dbReference>
<dbReference type="SMR" id="A7GW67"/>
<dbReference type="STRING" id="360105.CCV52592_1526"/>
<dbReference type="KEGG" id="ccv:CCV52592_1526"/>
<dbReference type="HOGENOM" id="CLU_015134_1_2_7"/>
<dbReference type="OrthoDB" id="9801496at2"/>
<dbReference type="Proteomes" id="UP000006380">
    <property type="component" value="Chromosome"/>
</dbReference>
<dbReference type="GO" id="GO:0005886">
    <property type="term" value="C:plasma membrane"/>
    <property type="evidence" value="ECO:0007669"/>
    <property type="project" value="UniProtKB-SubCell"/>
</dbReference>
<dbReference type="GO" id="GO:0051287">
    <property type="term" value="F:NAD binding"/>
    <property type="evidence" value="ECO:0007669"/>
    <property type="project" value="InterPro"/>
</dbReference>
<dbReference type="GO" id="GO:0050136">
    <property type="term" value="F:NADH:ubiquinone reductase (non-electrogenic) activity"/>
    <property type="evidence" value="ECO:0007669"/>
    <property type="project" value="UniProtKB-UniRule"/>
</dbReference>
<dbReference type="GO" id="GO:0048038">
    <property type="term" value="F:quinone binding"/>
    <property type="evidence" value="ECO:0007669"/>
    <property type="project" value="UniProtKB-KW"/>
</dbReference>
<dbReference type="Gene3D" id="1.10.645.10">
    <property type="entry name" value="Cytochrome-c3 Hydrogenase, chain B"/>
    <property type="match status" value="1"/>
</dbReference>
<dbReference type="HAMAP" id="MF_01358">
    <property type="entry name" value="NDH1_NuoD"/>
    <property type="match status" value="1"/>
</dbReference>
<dbReference type="InterPro" id="IPR001135">
    <property type="entry name" value="NADH_Q_OxRdtase_suD"/>
</dbReference>
<dbReference type="InterPro" id="IPR022885">
    <property type="entry name" value="NDH1_su_D/H"/>
</dbReference>
<dbReference type="InterPro" id="IPR029014">
    <property type="entry name" value="NiFe-Hase_large"/>
</dbReference>
<dbReference type="NCBIfam" id="TIGR01962">
    <property type="entry name" value="NuoD"/>
    <property type="match status" value="1"/>
</dbReference>
<dbReference type="NCBIfam" id="NF004739">
    <property type="entry name" value="PRK06075.1"/>
    <property type="match status" value="1"/>
</dbReference>
<dbReference type="PANTHER" id="PTHR11993:SF10">
    <property type="entry name" value="NADH DEHYDROGENASE [UBIQUINONE] IRON-SULFUR PROTEIN 2, MITOCHONDRIAL"/>
    <property type="match status" value="1"/>
</dbReference>
<dbReference type="PANTHER" id="PTHR11993">
    <property type="entry name" value="NADH-UBIQUINONE OXIDOREDUCTASE 49 KDA SUBUNIT"/>
    <property type="match status" value="1"/>
</dbReference>
<dbReference type="Pfam" id="PF00346">
    <property type="entry name" value="Complex1_49kDa"/>
    <property type="match status" value="1"/>
</dbReference>
<dbReference type="SUPFAM" id="SSF56762">
    <property type="entry name" value="HydB/Nqo4-like"/>
    <property type="match status" value="1"/>
</dbReference>
<organism>
    <name type="scientific">Campylobacter curvus (strain 525.92)</name>
    <dbReference type="NCBI Taxonomy" id="360105"/>
    <lineage>
        <taxon>Bacteria</taxon>
        <taxon>Pseudomonadati</taxon>
        <taxon>Campylobacterota</taxon>
        <taxon>Epsilonproteobacteria</taxon>
        <taxon>Campylobacterales</taxon>
        <taxon>Campylobacteraceae</taxon>
        <taxon>Campylobacter</taxon>
    </lineage>
</organism>
<protein>
    <recommendedName>
        <fullName evidence="1">NADH-quinone oxidoreductase subunit D</fullName>
        <ecNumber evidence="1">7.1.1.-</ecNumber>
    </recommendedName>
    <alternativeName>
        <fullName evidence="1">NADH dehydrogenase I subunit D</fullName>
    </alternativeName>
    <alternativeName>
        <fullName evidence="1">NDH-1 subunit D</fullName>
    </alternativeName>
</protein>
<feature type="chain" id="PRO_0000371844" description="NADH-quinone oxidoreductase subunit D">
    <location>
        <begin position="1"/>
        <end position="409"/>
    </location>
</feature>
<accession>A7GW67</accession>
<gene>
    <name evidence="1" type="primary">nuoD</name>
    <name type="ordered locus">Ccur92_01550</name>
    <name type="ORF">CCV52592_1526</name>
</gene>
<sequence>MSQAPNRLTPFFENIEFERNDGKMILNFGPQHPSAHGQLKLVLELDGEKVVRAMPEVGFMHRGIEKMAENMTYQEFIPVTDRVDYIASVANNYAFCEAVERLCEIKVPRRAQIIRVILLELNRISSHLLFLATHALDIGAMTVFLYAFREREYVLDMIEKYCGARLTHSAVRIGGMPLDLPEGWFEEMLKFCEKFPKDIKIYEDLLSENRIWKMRLENVGVISKELALSSGCSGVMLRASGVKWDIRKEQPYLVYDEIDFEVPYAVAGDCYARYVLYMREMKECVKILKQCERLYRASSREILADAPEFVSPSKEQIMTQNYSLMQHFVLITQGIKPKRGEIYFASESPKGELGIYINSQGEASPYRLKIRTPSFSHCAIYEDLLVGQYIADIAAIIGSTNIILGEVDR</sequence>
<evidence type="ECO:0000255" key="1">
    <source>
        <dbReference type="HAMAP-Rule" id="MF_01358"/>
    </source>
</evidence>